<evidence type="ECO:0000250" key="1">
    <source>
        <dbReference type="UniProtKB" id="P01814"/>
    </source>
</evidence>
<evidence type="ECO:0000250" key="2">
    <source>
        <dbReference type="UniProtKB" id="P23083"/>
    </source>
</evidence>
<evidence type="ECO:0000255" key="3"/>
<evidence type="ECO:0000255" key="4">
    <source>
        <dbReference type="PROSITE-ProRule" id="PRU00114"/>
    </source>
</evidence>
<evidence type="ECO:0000303" key="5">
    <source>
    </source>
</evidence>
<evidence type="ECO:0000303" key="6">
    <source>
    </source>
</evidence>
<evidence type="ECO:0000303" key="7">
    <source>
    </source>
</evidence>
<evidence type="ECO:0000303" key="8">
    <source>
    </source>
</evidence>
<evidence type="ECO:0000303" key="9">
    <source>
    </source>
</evidence>
<evidence type="ECO:0000303" key="10">
    <source ref="3"/>
</evidence>
<evidence type="ECO:0000305" key="11"/>
<sequence length="119" mass="13182">MDTLCYTLLLLTTPSWVLSQVTLKESGPVLVKPTETLTLTCTVSGFSLSNARMGVSWIRQPPGKALEWLAHIFSNDEKSYSTSLKSRLTISKDTSKSQVVLTMTNMDPVDTATYYCARI</sequence>
<gene>
    <name evidence="5 10" type="primary">IGHV2-26</name>
</gene>
<name>HV226_HUMAN</name>
<dbReference type="EMBL" id="AC245166">
    <property type="status" value="NOT_ANNOTATED_CDS"/>
    <property type="molecule type" value="Genomic_DNA"/>
</dbReference>
<dbReference type="SMR" id="A0A0B4J1V2"/>
<dbReference type="FunCoup" id="A0A0B4J1V2">
    <property type="interactions" value="290"/>
</dbReference>
<dbReference type="IMGT_GENE-DB" id="IGHV2-26"/>
<dbReference type="BioMuta" id="IGHV2-26"/>
<dbReference type="MassIVE" id="A0A0B4J1V2"/>
<dbReference type="Ensembl" id="ENST00000390611.2">
    <property type="protein sequence ID" value="ENSP00000375020.2"/>
    <property type="gene ID" value="ENSG00000211951.2"/>
</dbReference>
<dbReference type="Ensembl" id="ENST00000632457.1">
    <property type="protein sequence ID" value="ENSP00000487857.1"/>
    <property type="gene ID" value="ENSG00000282344.1"/>
</dbReference>
<dbReference type="AGR" id="HGNC:5575"/>
<dbReference type="GeneCards" id="IGHV2-26"/>
<dbReference type="HGNC" id="HGNC:5575">
    <property type="gene designation" value="IGHV2-26"/>
</dbReference>
<dbReference type="HPA" id="ENSG00000211951">
    <property type="expression patterns" value="Tissue enhanced (gallbladder, urinary bladder)"/>
</dbReference>
<dbReference type="neXtProt" id="NX_A0A0B4J1V2"/>
<dbReference type="OpenTargets" id="ENSG00000211951"/>
<dbReference type="VEuPathDB" id="HostDB:ENSG00000211951"/>
<dbReference type="GeneTree" id="ENSGT01030000234536"/>
<dbReference type="HOGENOM" id="CLU_077975_5_0_1"/>
<dbReference type="InParanoid" id="A0A0B4J1V2"/>
<dbReference type="OMA" id="HIFWNDE"/>
<dbReference type="OrthoDB" id="9876329at2759"/>
<dbReference type="PAN-GO" id="A0A0B4J1V2">
    <property type="GO annotations" value="11 GO annotations based on evolutionary models"/>
</dbReference>
<dbReference type="PhylomeDB" id="A0A0B4J1V2"/>
<dbReference type="SignaLink" id="A0A0B4J1V2"/>
<dbReference type="ChiTaRS" id="IGHV2-26">
    <property type="organism name" value="human"/>
</dbReference>
<dbReference type="Pharos" id="A0A0B4J1V2">
    <property type="development level" value="Tdark"/>
</dbReference>
<dbReference type="PRO" id="PR:A0A0B4J1V2"/>
<dbReference type="Proteomes" id="UP000005640">
    <property type="component" value="Chromosome 14"/>
</dbReference>
<dbReference type="RNAct" id="A0A0B4J1V2">
    <property type="molecule type" value="protein"/>
</dbReference>
<dbReference type="Bgee" id="ENSG00000211951">
    <property type="expression patterns" value="Expressed in rectum and 83 other cell types or tissues"/>
</dbReference>
<dbReference type="GO" id="GO:0005576">
    <property type="term" value="C:extracellular region"/>
    <property type="evidence" value="ECO:0007669"/>
    <property type="project" value="UniProtKB-SubCell"/>
</dbReference>
<dbReference type="GO" id="GO:0019814">
    <property type="term" value="C:immunoglobulin complex"/>
    <property type="evidence" value="ECO:0007669"/>
    <property type="project" value="UniProtKB-KW"/>
</dbReference>
<dbReference type="GO" id="GO:0005886">
    <property type="term" value="C:plasma membrane"/>
    <property type="evidence" value="ECO:0007669"/>
    <property type="project" value="UniProtKB-SubCell"/>
</dbReference>
<dbReference type="GO" id="GO:0003823">
    <property type="term" value="F:antigen binding"/>
    <property type="evidence" value="ECO:0000318"/>
    <property type="project" value="GO_Central"/>
</dbReference>
<dbReference type="GO" id="GO:0016064">
    <property type="term" value="P:immunoglobulin mediated immune response"/>
    <property type="evidence" value="ECO:0000318"/>
    <property type="project" value="GO_Central"/>
</dbReference>
<dbReference type="FunFam" id="2.60.40.10:FF:001533">
    <property type="entry name" value="Immunoglobulin heavy variable 2-26"/>
    <property type="match status" value="1"/>
</dbReference>
<dbReference type="Gene3D" id="2.60.40.10">
    <property type="entry name" value="Immunoglobulins"/>
    <property type="match status" value="1"/>
</dbReference>
<dbReference type="InterPro" id="IPR007110">
    <property type="entry name" value="Ig-like_dom"/>
</dbReference>
<dbReference type="InterPro" id="IPR036179">
    <property type="entry name" value="Ig-like_dom_sf"/>
</dbReference>
<dbReference type="InterPro" id="IPR013783">
    <property type="entry name" value="Ig-like_fold"/>
</dbReference>
<dbReference type="InterPro" id="IPR013106">
    <property type="entry name" value="Ig_V-set"/>
</dbReference>
<dbReference type="InterPro" id="IPR050199">
    <property type="entry name" value="IgHV"/>
</dbReference>
<dbReference type="PANTHER" id="PTHR23266">
    <property type="entry name" value="IMMUNOGLOBULIN HEAVY CHAIN"/>
    <property type="match status" value="1"/>
</dbReference>
<dbReference type="Pfam" id="PF07686">
    <property type="entry name" value="V-set"/>
    <property type="match status" value="1"/>
</dbReference>
<dbReference type="SMART" id="SM00406">
    <property type="entry name" value="IGv"/>
    <property type="match status" value="1"/>
</dbReference>
<dbReference type="SUPFAM" id="SSF48726">
    <property type="entry name" value="Immunoglobulin"/>
    <property type="match status" value="1"/>
</dbReference>
<dbReference type="PROSITE" id="PS50835">
    <property type="entry name" value="IG_LIKE"/>
    <property type="match status" value="1"/>
</dbReference>
<proteinExistence type="evidence at protein level"/>
<keyword id="KW-1064">Adaptive immunity</keyword>
<keyword id="KW-1003">Cell membrane</keyword>
<keyword id="KW-1015">Disulfide bond</keyword>
<keyword id="KW-0391">Immunity</keyword>
<keyword id="KW-1280">Immunoglobulin</keyword>
<keyword id="KW-0393">Immunoglobulin domain</keyword>
<keyword id="KW-0472">Membrane</keyword>
<keyword id="KW-1267">Proteomics identification</keyword>
<keyword id="KW-0873">Pyrrolidone carboxylic acid</keyword>
<keyword id="KW-1185">Reference proteome</keyword>
<keyword id="KW-0964">Secreted</keyword>
<keyword id="KW-0732">Signal</keyword>
<feature type="signal peptide" evidence="3">
    <location>
        <begin position="1"/>
        <end position="19"/>
    </location>
</feature>
<feature type="chain" id="PRO_5007390835" description="Immunoglobulin heavy variable 2-26" evidence="3">
    <location>
        <begin position="20"/>
        <end position="119"/>
    </location>
</feature>
<feature type="domain" description="Ig-like" evidence="4">
    <location>
        <begin position="20"/>
        <end position="119" status="greater than"/>
    </location>
</feature>
<feature type="region of interest" description="Framework-1" evidence="2">
    <location>
        <begin position="20"/>
        <end position="44"/>
    </location>
</feature>
<feature type="region of interest" description="Complementarity-determining-1" evidence="2">
    <location>
        <begin position="45"/>
        <end position="54"/>
    </location>
</feature>
<feature type="region of interest" description="Framework-2" evidence="2">
    <location>
        <begin position="55"/>
        <end position="71"/>
    </location>
</feature>
<feature type="region of interest" description="Complementarity-determining-2" evidence="2">
    <location>
        <begin position="72"/>
        <end position="78"/>
    </location>
</feature>
<feature type="region of interest" description="Framework-3" evidence="2">
    <location>
        <begin position="79"/>
        <end position="116"/>
    </location>
</feature>
<feature type="region of interest" description="Complementarity-determining-3" evidence="2">
    <location>
        <begin position="117"/>
        <end position="119" status="greater than"/>
    </location>
</feature>
<feature type="modified residue" description="Pyrrolidone carboxylic acid" evidence="1">
    <location>
        <position position="20"/>
    </location>
</feature>
<feature type="disulfide bond" evidence="4">
    <location>
        <begin position="41"/>
        <end position="116"/>
    </location>
</feature>
<feature type="non-terminal residue">
    <location>
        <position position="119"/>
    </location>
</feature>
<protein>
    <recommendedName>
        <fullName evidence="5 10">Immunoglobulin heavy variable 2-26</fullName>
    </recommendedName>
</protein>
<accession>A0A0B4J1V2</accession>
<comment type="function">
    <text evidence="6 7 8 9">V region of the variable domain of immunoglobulin heavy chains that participates in the antigen recognition (PubMed:24600447). Immunoglobulins, also known as antibodies, are membrane-bound or secreted glycoproteins produced by B lymphocytes. In the recognition phase of humoral immunity, the membrane-bound immunoglobulins serve as receptors which, upon binding of a specific antigen, trigger the clonal expansion and differentiation of B lymphocytes into immunoglobulins-secreting plasma cells. Secreted immunoglobulins mediate the effector phase of humoral immunity, which results in the elimination of bound antigens (PubMed:20176268, PubMed:22158414). The antigen binding site is formed by the variable domain of one heavy chain, together with that of its associated light chain. Thus, each immunoglobulin has two antigen binding sites with remarkable affinity for a particular antigen. The variable domains are assembled by a process called V-(D)-J rearrangement and can then be subjected to somatic hypermutations which, after exposure to antigen and selection, allow affinity maturation for a particular antigen (PubMed:17576170, PubMed:20176268).</text>
</comment>
<comment type="subunit">
    <text evidence="7">Immunoglobulins are composed of two identical heavy chains and two identical light chains; disulfide-linked.</text>
</comment>
<comment type="subcellular location">
    <subcellularLocation>
        <location evidence="7 8">Secreted</location>
    </subcellularLocation>
    <subcellularLocation>
        <location evidence="7 8">Cell membrane</location>
    </subcellularLocation>
</comment>
<comment type="polymorphism">
    <text evidence="11">There are several alleles. The sequence shown is that of IMGT allele IGHV2-26*01.</text>
</comment>
<comment type="caution">
    <text evidence="11">For examples of full-length immunoglobulin heavy chains (of different isotypes) see AC P0DOX2, AC P0DOX3, AC P0DOX4, AC P0DOX5 and AC P0DOX6.</text>
</comment>
<reference key="1">
    <citation type="journal article" date="2003" name="Nature">
        <title>The DNA sequence and analysis of human chromosome 14.</title>
        <authorList>
            <person name="Heilig R."/>
            <person name="Eckenberg R."/>
            <person name="Petit J.-L."/>
            <person name="Fonknechten N."/>
            <person name="Da Silva C."/>
            <person name="Cattolico L."/>
            <person name="Levy M."/>
            <person name="Barbe V."/>
            <person name="De Berardinis V."/>
            <person name="Ureta-Vidal A."/>
            <person name="Pelletier E."/>
            <person name="Vico V."/>
            <person name="Anthouard V."/>
            <person name="Rowen L."/>
            <person name="Madan A."/>
            <person name="Qin S."/>
            <person name="Sun H."/>
            <person name="Du H."/>
            <person name="Pepin K."/>
            <person name="Artiguenave F."/>
            <person name="Robert C."/>
            <person name="Cruaud C."/>
            <person name="Bruels T."/>
            <person name="Jaillon O."/>
            <person name="Friedlander L."/>
            <person name="Samson G."/>
            <person name="Brottier P."/>
            <person name="Cure S."/>
            <person name="Segurens B."/>
            <person name="Aniere F."/>
            <person name="Samain S."/>
            <person name="Crespeau H."/>
            <person name="Abbasi N."/>
            <person name="Aiach N."/>
            <person name="Boscus D."/>
            <person name="Dickhoff R."/>
            <person name="Dors M."/>
            <person name="Dubois I."/>
            <person name="Friedman C."/>
            <person name="Gouyvenoux M."/>
            <person name="James R."/>
            <person name="Madan A."/>
            <person name="Mairey-Estrada B."/>
            <person name="Mangenot S."/>
            <person name="Martins N."/>
            <person name="Menard M."/>
            <person name="Oztas S."/>
            <person name="Ratcliffe A."/>
            <person name="Shaffer T."/>
            <person name="Trask B."/>
            <person name="Vacherie B."/>
            <person name="Bellemere C."/>
            <person name="Belser C."/>
            <person name="Besnard-Gonnet M."/>
            <person name="Bartol-Mavel D."/>
            <person name="Boutard M."/>
            <person name="Briez-Silla S."/>
            <person name="Combette S."/>
            <person name="Dufosse-Laurent V."/>
            <person name="Ferron C."/>
            <person name="Lechaplais C."/>
            <person name="Louesse C."/>
            <person name="Muselet D."/>
            <person name="Magdelenat G."/>
            <person name="Pateau E."/>
            <person name="Petit E."/>
            <person name="Sirvain-Trukniewicz P."/>
            <person name="Trybou A."/>
            <person name="Vega-Czarny N."/>
            <person name="Bataille E."/>
            <person name="Bluet E."/>
            <person name="Bordelais I."/>
            <person name="Dubois M."/>
            <person name="Dumont C."/>
            <person name="Guerin T."/>
            <person name="Haffray S."/>
            <person name="Hammadi R."/>
            <person name="Muanga J."/>
            <person name="Pellouin V."/>
            <person name="Robert D."/>
            <person name="Wunderle E."/>
            <person name="Gauguet G."/>
            <person name="Roy A."/>
            <person name="Sainte-Marthe L."/>
            <person name="Verdier J."/>
            <person name="Verdier-Discala C."/>
            <person name="Hillier L.W."/>
            <person name="Fulton L."/>
            <person name="McPherson J."/>
            <person name="Matsuda F."/>
            <person name="Wilson R."/>
            <person name="Scarpelli C."/>
            <person name="Gyapay G."/>
            <person name="Wincker P."/>
            <person name="Saurin W."/>
            <person name="Quetier F."/>
            <person name="Waterston R."/>
            <person name="Hood L."/>
            <person name="Weissenbach J."/>
        </authorList>
    </citation>
    <scope>NUCLEOTIDE SEQUENCE [LARGE SCALE GENOMIC DNA] (IMGT ALLELE IGHV2-26*01)</scope>
</reference>
<reference key="2">
    <citation type="journal article" date="2001" name="Exp. Clin. Immunogenet.">
        <title>Nomenclature of the human immunoglobulin heavy (IGH) genes.</title>
        <authorList>
            <person name="Lefranc M.P."/>
        </authorList>
    </citation>
    <scope>NOMENCLATURE</scope>
</reference>
<reference key="3">
    <citation type="book" date="2001" name="The Immunoglobulin FactsBook.">
        <title>The Immunoglobulin FactsBook.</title>
        <editorList>
            <person name="Lefranc M.P."/>
            <person name="Lefranc G."/>
        </editorList>
        <authorList>
            <person name="Lefranc M.P."/>
            <person name="Lefranc G."/>
        </authorList>
    </citation>
    <scope>NOMENCLATURE</scope>
</reference>
<reference key="4">
    <citation type="journal article" date="2007" name="Annu. Rev. Genet.">
        <title>Immunoglobulin somatic hypermutation.</title>
        <authorList>
            <person name="Teng G."/>
            <person name="Papavasiliou F.N."/>
        </authorList>
    </citation>
    <scope>REVIEW ON SOMATIC HYPERMUTATION</scope>
</reference>
<reference key="5">
    <citation type="journal article" date="2010" name="J. Allergy Clin. Immunol.">
        <title>Structure and function of immunoglobulins.</title>
        <authorList>
            <person name="Schroeder H.W. Jr."/>
            <person name="Cavacini L."/>
        </authorList>
    </citation>
    <scope>REVIEW ON IMMUNOGLOBULINS</scope>
</reference>
<reference key="6">
    <citation type="journal article" date="2012" name="Nat. Rev. Immunol.">
        <title>Molecular programming of B cell memory.</title>
        <authorList>
            <person name="McHeyzer-Williams M."/>
            <person name="Okitsu S."/>
            <person name="Wang N."/>
            <person name="McHeyzer-Williams L."/>
        </authorList>
    </citation>
    <scope>REVIEW ON FUNCTION</scope>
</reference>
<reference key="7">
    <citation type="journal article" date="2014" name="Front. Immunol.">
        <title>Immunoglobulin and T Cell Receptor Genes: IMGT((R)) and the Birth and Rise of Immunoinformatics.</title>
        <authorList>
            <person name="Lefranc M.P."/>
        </authorList>
    </citation>
    <scope>NOMENCLATURE</scope>
</reference>
<organism>
    <name type="scientific">Homo sapiens</name>
    <name type="common">Human</name>
    <dbReference type="NCBI Taxonomy" id="9606"/>
    <lineage>
        <taxon>Eukaryota</taxon>
        <taxon>Metazoa</taxon>
        <taxon>Chordata</taxon>
        <taxon>Craniata</taxon>
        <taxon>Vertebrata</taxon>
        <taxon>Euteleostomi</taxon>
        <taxon>Mammalia</taxon>
        <taxon>Eutheria</taxon>
        <taxon>Euarchontoglires</taxon>
        <taxon>Primates</taxon>
        <taxon>Haplorrhini</taxon>
        <taxon>Catarrhini</taxon>
        <taxon>Hominidae</taxon>
        <taxon>Homo</taxon>
    </lineage>
</organism>